<organism>
    <name type="scientific">Burkholderia mallei (strain ATCC 23344)</name>
    <dbReference type="NCBI Taxonomy" id="243160"/>
    <lineage>
        <taxon>Bacteria</taxon>
        <taxon>Pseudomonadati</taxon>
        <taxon>Pseudomonadota</taxon>
        <taxon>Betaproteobacteria</taxon>
        <taxon>Burkholderiales</taxon>
        <taxon>Burkholderiaceae</taxon>
        <taxon>Burkholderia</taxon>
        <taxon>pseudomallei group</taxon>
    </lineage>
</organism>
<gene>
    <name evidence="1" type="primary">plsY</name>
    <name type="ordered locus">BMA0372</name>
</gene>
<comment type="function">
    <text evidence="1">Catalyzes the transfer of an acyl group from acyl-phosphate (acyl-PO(4)) to glycerol-3-phosphate (G3P) to form lysophosphatidic acid (LPA). This enzyme utilizes acyl-phosphate as fatty acyl donor, but not acyl-CoA or acyl-ACP.</text>
</comment>
<comment type="catalytic activity">
    <reaction evidence="1">
        <text>an acyl phosphate + sn-glycerol 3-phosphate = a 1-acyl-sn-glycero-3-phosphate + phosphate</text>
        <dbReference type="Rhea" id="RHEA:34075"/>
        <dbReference type="ChEBI" id="CHEBI:43474"/>
        <dbReference type="ChEBI" id="CHEBI:57597"/>
        <dbReference type="ChEBI" id="CHEBI:57970"/>
        <dbReference type="ChEBI" id="CHEBI:59918"/>
        <dbReference type="EC" id="2.3.1.275"/>
    </reaction>
</comment>
<comment type="pathway">
    <text evidence="1">Lipid metabolism; phospholipid metabolism.</text>
</comment>
<comment type="subunit">
    <text evidence="1">Probably interacts with PlsX.</text>
</comment>
<comment type="subcellular location">
    <subcellularLocation>
        <location evidence="1">Cell inner membrane</location>
        <topology evidence="1">Multi-pass membrane protein</topology>
    </subcellularLocation>
</comment>
<comment type="similarity">
    <text evidence="1">Belongs to the PlsY family.</text>
</comment>
<sequence>MQILLATVAAYLIGSVSFAVVVSAAMGLADPRSYGSKNPGATNVLRSGNKKAAILTLVGDAFKGWLAVWLVKRFGIGGEIGVALAAIAVFLGHLHPVFFRFQGGKGVATAAGVLLAVHPVLGLATALTWLIVAFFFRYSSLAALVAAVFAPIFDVFLFGTHDNPVAWAVLAMSVLLIWRHRSNISKLLAGEESRIGQKKKTGV</sequence>
<dbReference type="EC" id="2.3.1.275" evidence="1"/>
<dbReference type="EMBL" id="CP000010">
    <property type="protein sequence ID" value="AAU49183.1"/>
    <property type="molecule type" value="Genomic_DNA"/>
</dbReference>
<dbReference type="RefSeq" id="WP_004189721.1">
    <property type="nucleotide sequence ID" value="NC_006348.1"/>
</dbReference>
<dbReference type="RefSeq" id="YP_102189.1">
    <property type="nucleotide sequence ID" value="NC_006348.1"/>
</dbReference>
<dbReference type="SMR" id="Q62M79"/>
<dbReference type="GeneID" id="92978142"/>
<dbReference type="KEGG" id="bma:BMA0372"/>
<dbReference type="PATRIC" id="fig|243160.12.peg.375"/>
<dbReference type="eggNOG" id="COG0344">
    <property type="taxonomic scope" value="Bacteria"/>
</dbReference>
<dbReference type="HOGENOM" id="CLU_081254_0_0_4"/>
<dbReference type="UniPathway" id="UPA00085"/>
<dbReference type="Proteomes" id="UP000006693">
    <property type="component" value="Chromosome 1"/>
</dbReference>
<dbReference type="GO" id="GO:0005886">
    <property type="term" value="C:plasma membrane"/>
    <property type="evidence" value="ECO:0007669"/>
    <property type="project" value="UniProtKB-SubCell"/>
</dbReference>
<dbReference type="GO" id="GO:0043772">
    <property type="term" value="F:acyl-phosphate glycerol-3-phosphate acyltransferase activity"/>
    <property type="evidence" value="ECO:0007669"/>
    <property type="project" value="UniProtKB-UniRule"/>
</dbReference>
<dbReference type="GO" id="GO:0008654">
    <property type="term" value="P:phospholipid biosynthetic process"/>
    <property type="evidence" value="ECO:0007669"/>
    <property type="project" value="UniProtKB-UniRule"/>
</dbReference>
<dbReference type="HAMAP" id="MF_01043">
    <property type="entry name" value="PlsY"/>
    <property type="match status" value="1"/>
</dbReference>
<dbReference type="InterPro" id="IPR003811">
    <property type="entry name" value="G3P_acylTferase_PlsY"/>
</dbReference>
<dbReference type="NCBIfam" id="TIGR00023">
    <property type="entry name" value="glycerol-3-phosphate 1-O-acyltransferase PlsY"/>
    <property type="match status" value="1"/>
</dbReference>
<dbReference type="PANTHER" id="PTHR30309:SF0">
    <property type="entry name" value="GLYCEROL-3-PHOSPHATE ACYLTRANSFERASE-RELATED"/>
    <property type="match status" value="1"/>
</dbReference>
<dbReference type="PANTHER" id="PTHR30309">
    <property type="entry name" value="INNER MEMBRANE PROTEIN YGIH"/>
    <property type="match status" value="1"/>
</dbReference>
<dbReference type="Pfam" id="PF02660">
    <property type="entry name" value="G3P_acyltransf"/>
    <property type="match status" value="1"/>
</dbReference>
<dbReference type="SMART" id="SM01207">
    <property type="entry name" value="G3P_acyltransf"/>
    <property type="match status" value="1"/>
</dbReference>
<protein>
    <recommendedName>
        <fullName evidence="1">Glycerol-3-phosphate acyltransferase</fullName>
    </recommendedName>
    <alternativeName>
        <fullName evidence="1">Acyl-PO4 G3P acyltransferase</fullName>
    </alternativeName>
    <alternativeName>
        <fullName evidence="1">Acyl-phosphate--glycerol-3-phosphate acyltransferase</fullName>
    </alternativeName>
    <alternativeName>
        <fullName evidence="1">G3P acyltransferase</fullName>
        <shortName evidence="1">GPAT</shortName>
        <ecNumber evidence="1">2.3.1.275</ecNumber>
    </alternativeName>
    <alternativeName>
        <fullName evidence="1">Lysophosphatidic acid synthase</fullName>
        <shortName evidence="1">LPA synthase</shortName>
    </alternativeName>
</protein>
<feature type="chain" id="PRO_0000188339" description="Glycerol-3-phosphate acyltransferase">
    <location>
        <begin position="1"/>
        <end position="203"/>
    </location>
</feature>
<feature type="transmembrane region" description="Helical" evidence="1">
    <location>
        <begin position="3"/>
        <end position="23"/>
    </location>
</feature>
<feature type="transmembrane region" description="Helical" evidence="1">
    <location>
        <begin position="51"/>
        <end position="71"/>
    </location>
</feature>
<feature type="transmembrane region" description="Helical" evidence="1">
    <location>
        <begin position="74"/>
        <end position="94"/>
    </location>
</feature>
<feature type="transmembrane region" description="Helical" evidence="1">
    <location>
        <begin position="116"/>
        <end position="136"/>
    </location>
</feature>
<feature type="transmembrane region" description="Helical" evidence="1">
    <location>
        <begin position="140"/>
        <end position="160"/>
    </location>
</feature>
<feature type="transmembrane region" description="Helical" evidence="1">
    <location>
        <begin position="164"/>
        <end position="178"/>
    </location>
</feature>
<proteinExistence type="inferred from homology"/>
<accession>Q62M79</accession>
<reference key="1">
    <citation type="journal article" date="2004" name="Proc. Natl. Acad. Sci. U.S.A.">
        <title>Structural flexibility in the Burkholderia mallei genome.</title>
        <authorList>
            <person name="Nierman W.C."/>
            <person name="DeShazer D."/>
            <person name="Kim H.S."/>
            <person name="Tettelin H."/>
            <person name="Nelson K.E."/>
            <person name="Feldblyum T.V."/>
            <person name="Ulrich R.L."/>
            <person name="Ronning C.M."/>
            <person name="Brinkac L.M."/>
            <person name="Daugherty S.C."/>
            <person name="Davidsen T.D."/>
            <person name="DeBoy R.T."/>
            <person name="Dimitrov G."/>
            <person name="Dodson R.J."/>
            <person name="Durkin A.S."/>
            <person name="Gwinn M.L."/>
            <person name="Haft D.H."/>
            <person name="Khouri H.M."/>
            <person name="Kolonay J.F."/>
            <person name="Madupu R."/>
            <person name="Mohammoud Y."/>
            <person name="Nelson W.C."/>
            <person name="Radune D."/>
            <person name="Romero C.M."/>
            <person name="Sarria S."/>
            <person name="Selengut J."/>
            <person name="Shamblin C."/>
            <person name="Sullivan S.A."/>
            <person name="White O."/>
            <person name="Yu Y."/>
            <person name="Zafar N."/>
            <person name="Zhou L."/>
            <person name="Fraser C.M."/>
        </authorList>
    </citation>
    <scope>NUCLEOTIDE SEQUENCE [LARGE SCALE GENOMIC DNA]</scope>
    <source>
        <strain>ATCC 23344</strain>
    </source>
</reference>
<name>PLSY_BURMA</name>
<evidence type="ECO:0000255" key="1">
    <source>
        <dbReference type="HAMAP-Rule" id="MF_01043"/>
    </source>
</evidence>
<keyword id="KW-0997">Cell inner membrane</keyword>
<keyword id="KW-1003">Cell membrane</keyword>
<keyword id="KW-0444">Lipid biosynthesis</keyword>
<keyword id="KW-0443">Lipid metabolism</keyword>
<keyword id="KW-0472">Membrane</keyword>
<keyword id="KW-0594">Phospholipid biosynthesis</keyword>
<keyword id="KW-1208">Phospholipid metabolism</keyword>
<keyword id="KW-1185">Reference proteome</keyword>
<keyword id="KW-0808">Transferase</keyword>
<keyword id="KW-0812">Transmembrane</keyword>
<keyword id="KW-1133">Transmembrane helix</keyword>